<dbReference type="EC" id="2.7.2.3"/>
<dbReference type="EMBL" id="JX987083">
    <property type="protein sequence ID" value="AGC67027.1"/>
    <property type="molecule type" value="Genomic_DNA"/>
</dbReference>
<dbReference type="EMBL" id="KC147006">
    <property type="protein sequence ID" value="AGC74190.1"/>
    <property type="molecule type" value="Genomic_DNA"/>
</dbReference>
<dbReference type="EMBL" id="AL123456">
    <property type="protein sequence ID" value="CCP44196.1"/>
    <property type="molecule type" value="Genomic_DNA"/>
</dbReference>
<dbReference type="PIR" id="H70915">
    <property type="entry name" value="H70915"/>
</dbReference>
<dbReference type="RefSeq" id="NP_215953.1">
    <property type="nucleotide sequence ID" value="NC_000962.3"/>
</dbReference>
<dbReference type="RefSeq" id="WP_003900339.1">
    <property type="nucleotide sequence ID" value="NZ_NVQJ01000038.1"/>
</dbReference>
<dbReference type="SMR" id="P9WID1"/>
<dbReference type="FunCoup" id="P9WID1">
    <property type="interactions" value="480"/>
</dbReference>
<dbReference type="STRING" id="83332.Rv1437"/>
<dbReference type="PaxDb" id="83332-Rv1437"/>
<dbReference type="DNASU" id="886636"/>
<dbReference type="GeneID" id="886636"/>
<dbReference type="KEGG" id="mtu:Rv1437"/>
<dbReference type="KEGG" id="mtv:RVBD_1437"/>
<dbReference type="TubercuList" id="Rv1437"/>
<dbReference type="eggNOG" id="COG0126">
    <property type="taxonomic scope" value="Bacteria"/>
</dbReference>
<dbReference type="InParanoid" id="P9WID1"/>
<dbReference type="OrthoDB" id="9808460at2"/>
<dbReference type="PhylomeDB" id="P9WID1"/>
<dbReference type="UniPathway" id="UPA00109">
    <property type="reaction ID" value="UER00185"/>
</dbReference>
<dbReference type="Proteomes" id="UP000001584">
    <property type="component" value="Chromosome"/>
</dbReference>
<dbReference type="GO" id="GO:0005829">
    <property type="term" value="C:cytosol"/>
    <property type="evidence" value="ECO:0000318"/>
    <property type="project" value="GO_Central"/>
</dbReference>
<dbReference type="GO" id="GO:0005576">
    <property type="term" value="C:extracellular region"/>
    <property type="evidence" value="ECO:0007005"/>
    <property type="project" value="MTBBASE"/>
</dbReference>
<dbReference type="GO" id="GO:0005886">
    <property type="term" value="C:plasma membrane"/>
    <property type="evidence" value="ECO:0007005"/>
    <property type="project" value="MTBBASE"/>
</dbReference>
<dbReference type="GO" id="GO:0043531">
    <property type="term" value="F:ADP binding"/>
    <property type="evidence" value="ECO:0000318"/>
    <property type="project" value="GO_Central"/>
</dbReference>
<dbReference type="GO" id="GO:0005524">
    <property type="term" value="F:ATP binding"/>
    <property type="evidence" value="ECO:0000318"/>
    <property type="project" value="GO_Central"/>
</dbReference>
<dbReference type="GO" id="GO:0004618">
    <property type="term" value="F:phosphoglycerate kinase activity"/>
    <property type="evidence" value="ECO:0000318"/>
    <property type="project" value="GO_Central"/>
</dbReference>
<dbReference type="GO" id="GO:0006094">
    <property type="term" value="P:gluconeogenesis"/>
    <property type="evidence" value="ECO:0000318"/>
    <property type="project" value="GO_Central"/>
</dbReference>
<dbReference type="GO" id="GO:0006096">
    <property type="term" value="P:glycolytic process"/>
    <property type="evidence" value="ECO:0000318"/>
    <property type="project" value="GO_Central"/>
</dbReference>
<dbReference type="CDD" id="cd00318">
    <property type="entry name" value="Phosphoglycerate_kinase"/>
    <property type="match status" value="1"/>
</dbReference>
<dbReference type="FunFam" id="3.40.50.1260:FF:000006">
    <property type="entry name" value="Phosphoglycerate kinase"/>
    <property type="match status" value="1"/>
</dbReference>
<dbReference type="FunFam" id="3.40.50.1260:FF:000031">
    <property type="entry name" value="Phosphoglycerate kinase 1"/>
    <property type="match status" value="1"/>
</dbReference>
<dbReference type="Gene3D" id="3.40.50.1260">
    <property type="entry name" value="Phosphoglycerate kinase, N-terminal domain"/>
    <property type="match status" value="2"/>
</dbReference>
<dbReference type="HAMAP" id="MF_00145">
    <property type="entry name" value="Phosphoglyc_kinase"/>
    <property type="match status" value="1"/>
</dbReference>
<dbReference type="InterPro" id="IPR001576">
    <property type="entry name" value="Phosphoglycerate_kinase"/>
</dbReference>
<dbReference type="InterPro" id="IPR015911">
    <property type="entry name" value="Phosphoglycerate_kinase_CS"/>
</dbReference>
<dbReference type="InterPro" id="IPR015824">
    <property type="entry name" value="Phosphoglycerate_kinase_N"/>
</dbReference>
<dbReference type="InterPro" id="IPR036043">
    <property type="entry name" value="Phosphoglycerate_kinase_sf"/>
</dbReference>
<dbReference type="PANTHER" id="PTHR11406">
    <property type="entry name" value="PHOSPHOGLYCERATE KINASE"/>
    <property type="match status" value="1"/>
</dbReference>
<dbReference type="PANTHER" id="PTHR11406:SF23">
    <property type="entry name" value="PHOSPHOGLYCERATE KINASE 1, CHLOROPLASTIC-RELATED"/>
    <property type="match status" value="1"/>
</dbReference>
<dbReference type="Pfam" id="PF00162">
    <property type="entry name" value="PGK"/>
    <property type="match status" value="1"/>
</dbReference>
<dbReference type="PIRSF" id="PIRSF000724">
    <property type="entry name" value="Pgk"/>
    <property type="match status" value="1"/>
</dbReference>
<dbReference type="PRINTS" id="PR00477">
    <property type="entry name" value="PHGLYCKINASE"/>
</dbReference>
<dbReference type="SUPFAM" id="SSF53748">
    <property type="entry name" value="Phosphoglycerate kinase"/>
    <property type="match status" value="1"/>
</dbReference>
<dbReference type="PROSITE" id="PS00111">
    <property type="entry name" value="PGLYCERATE_KINASE"/>
    <property type="match status" value="1"/>
</dbReference>
<evidence type="ECO:0000250" key="1"/>
<evidence type="ECO:0000305" key="2"/>
<reference key="1">
    <citation type="submission" date="2012-10" db="EMBL/GenBank/DDBJ databases">
        <title>Complete gene sequence of Rv1437 of Mycobacterium tuberculosis strain AIIMS/LM/SS/TB-2016 I/05 SP.</title>
        <authorList>
            <person name="Singh A."/>
            <person name="Singh S."/>
        </authorList>
    </citation>
    <scope>NUCLEOTIDE SEQUENCE [GENOMIC DNA]</scope>
    <source>
        <strain>AIIMS/LM/SS/TB-2016-I/05-SP</strain>
    </source>
</reference>
<reference key="2">
    <citation type="submission" date="2012-10" db="EMBL/GenBank/DDBJ databases">
        <authorList>
            <person name="Singh A."/>
            <person name="Sharma P."/>
            <person name="Singh S."/>
        </authorList>
    </citation>
    <scope>NUCLEOTIDE SEQUENCE [GENOMIC DNA]</scope>
    <source>
        <strain>AIIMS/LM/SS/TB-1920/06/SP</strain>
    </source>
</reference>
<reference key="3">
    <citation type="journal article" date="1998" name="Nature">
        <title>Deciphering the biology of Mycobacterium tuberculosis from the complete genome sequence.</title>
        <authorList>
            <person name="Cole S.T."/>
            <person name="Brosch R."/>
            <person name="Parkhill J."/>
            <person name="Garnier T."/>
            <person name="Churcher C.M."/>
            <person name="Harris D.E."/>
            <person name="Gordon S.V."/>
            <person name="Eiglmeier K."/>
            <person name="Gas S."/>
            <person name="Barry C.E. III"/>
            <person name="Tekaia F."/>
            <person name="Badcock K."/>
            <person name="Basham D."/>
            <person name="Brown D."/>
            <person name="Chillingworth T."/>
            <person name="Connor R."/>
            <person name="Davies R.M."/>
            <person name="Devlin K."/>
            <person name="Feltwell T."/>
            <person name="Gentles S."/>
            <person name="Hamlin N."/>
            <person name="Holroyd S."/>
            <person name="Hornsby T."/>
            <person name="Jagels K."/>
            <person name="Krogh A."/>
            <person name="McLean J."/>
            <person name="Moule S."/>
            <person name="Murphy L.D."/>
            <person name="Oliver S."/>
            <person name="Osborne J."/>
            <person name="Quail M.A."/>
            <person name="Rajandream M.A."/>
            <person name="Rogers J."/>
            <person name="Rutter S."/>
            <person name="Seeger K."/>
            <person name="Skelton S."/>
            <person name="Squares S."/>
            <person name="Squares R."/>
            <person name="Sulston J.E."/>
            <person name="Taylor K."/>
            <person name="Whitehead S."/>
            <person name="Barrell B.G."/>
        </authorList>
    </citation>
    <scope>NUCLEOTIDE SEQUENCE [LARGE SCALE GENOMIC DNA]</scope>
    <source>
        <strain>ATCC 25618 / H37Rv</strain>
    </source>
</reference>
<reference key="4">
    <citation type="journal article" date="2011" name="Mol. Cell. Proteomics">
        <title>Proteogenomic analysis of Mycobacterium tuberculosis by high resolution mass spectrometry.</title>
        <authorList>
            <person name="Kelkar D.S."/>
            <person name="Kumar D."/>
            <person name="Kumar P."/>
            <person name="Balakrishnan L."/>
            <person name="Muthusamy B."/>
            <person name="Yadav A.K."/>
            <person name="Shrivastava P."/>
            <person name="Marimuthu A."/>
            <person name="Anand S."/>
            <person name="Sundaram H."/>
            <person name="Kingsbury R."/>
            <person name="Harsha H.C."/>
            <person name="Nair B."/>
            <person name="Prasad T.S."/>
            <person name="Chauhan D.S."/>
            <person name="Katoch K."/>
            <person name="Katoch V.M."/>
            <person name="Kumar P."/>
            <person name="Chaerkady R."/>
            <person name="Ramachandran S."/>
            <person name="Dash D."/>
            <person name="Pandey A."/>
        </authorList>
    </citation>
    <scope>IDENTIFICATION BY MASS SPECTROMETRY [LARGE SCALE ANALYSIS]</scope>
    <source>
        <strain>ATCC 25618 / H37Rv</strain>
    </source>
</reference>
<name>PGK_MYCTU</name>
<comment type="catalytic activity">
    <reaction>
        <text>(2R)-3-phosphoglycerate + ATP = (2R)-3-phospho-glyceroyl phosphate + ADP</text>
        <dbReference type="Rhea" id="RHEA:14801"/>
        <dbReference type="ChEBI" id="CHEBI:30616"/>
        <dbReference type="ChEBI" id="CHEBI:57604"/>
        <dbReference type="ChEBI" id="CHEBI:58272"/>
        <dbReference type="ChEBI" id="CHEBI:456216"/>
        <dbReference type="EC" id="2.7.2.3"/>
    </reaction>
</comment>
<comment type="pathway">
    <text>Carbohydrate degradation; glycolysis; pyruvate from D-glyceraldehyde 3-phosphate: step 2/5.</text>
</comment>
<comment type="subunit">
    <text evidence="1">Monomer.</text>
</comment>
<comment type="subcellular location">
    <subcellularLocation>
        <location evidence="2">Cytoplasm</location>
    </subcellularLocation>
</comment>
<comment type="similarity">
    <text evidence="2">Belongs to the phosphoglycerate kinase family.</text>
</comment>
<organism>
    <name type="scientific">Mycobacterium tuberculosis (strain ATCC 25618 / H37Rv)</name>
    <dbReference type="NCBI Taxonomy" id="83332"/>
    <lineage>
        <taxon>Bacteria</taxon>
        <taxon>Bacillati</taxon>
        <taxon>Actinomycetota</taxon>
        <taxon>Actinomycetes</taxon>
        <taxon>Mycobacteriales</taxon>
        <taxon>Mycobacteriaceae</taxon>
        <taxon>Mycobacterium</taxon>
        <taxon>Mycobacterium tuberculosis complex</taxon>
    </lineage>
</organism>
<keyword id="KW-0067">ATP-binding</keyword>
<keyword id="KW-0963">Cytoplasm</keyword>
<keyword id="KW-0324">Glycolysis</keyword>
<keyword id="KW-0418">Kinase</keyword>
<keyword id="KW-0547">Nucleotide-binding</keyword>
<keyword id="KW-1185">Reference proteome</keyword>
<keyword id="KW-0808">Transferase</keyword>
<proteinExistence type="evidence at protein level"/>
<feature type="chain" id="PRO_0000145973" description="Phosphoglycerate kinase">
    <location>
        <begin position="1"/>
        <end position="412"/>
    </location>
</feature>
<feature type="binding site" evidence="1">
    <location>
        <begin position="24"/>
        <end position="26"/>
    </location>
    <ligand>
        <name>substrate</name>
    </ligand>
</feature>
<feature type="binding site" evidence="1">
    <location>
        <position position="40"/>
    </location>
    <ligand>
        <name>substrate</name>
    </ligand>
</feature>
<feature type="binding site" evidence="1">
    <location>
        <begin position="63"/>
        <end position="66"/>
    </location>
    <ligand>
        <name>substrate</name>
    </ligand>
</feature>
<feature type="binding site" evidence="1">
    <location>
        <position position="122"/>
    </location>
    <ligand>
        <name>substrate</name>
    </ligand>
</feature>
<feature type="binding site" evidence="1">
    <location>
        <position position="162"/>
    </location>
    <ligand>
        <name>substrate</name>
    </ligand>
</feature>
<feature type="binding site" evidence="1">
    <location>
        <position position="212"/>
    </location>
    <ligand>
        <name>ATP</name>
        <dbReference type="ChEBI" id="CHEBI:30616"/>
    </ligand>
</feature>
<feature type="binding site" evidence="1">
    <location>
        <position position="300"/>
    </location>
    <ligand>
        <name>ATP</name>
        <dbReference type="ChEBI" id="CHEBI:30616"/>
    </ligand>
</feature>
<feature type="binding site" evidence="1">
    <location>
        <position position="331"/>
    </location>
    <ligand>
        <name>ATP</name>
        <dbReference type="ChEBI" id="CHEBI:30616"/>
    </ligand>
</feature>
<feature type="binding site" evidence="1">
    <location>
        <begin position="360"/>
        <end position="363"/>
    </location>
    <ligand>
        <name>ATP</name>
        <dbReference type="ChEBI" id="CHEBI:30616"/>
    </ligand>
</feature>
<sequence length="412" mass="42512">MSVANLKDLLAEGVSGRGVLVRSDLNVPLDEDGTITDAGRIIASAPTLKALLDADAKVVVAAHLGRPKDGPDPTLSLAPVAVALGEQLGRHVQLAGDVVGADALARAEGLTGGDILLLENIRFDKRETSKNDDDRRALAKQLVELVGTGGVFVSDGFGVVHRKQASVYDIATLLPHYAGTLVADEMRVLEQLTSSTQRPYAVVLGGSKVSDKLGVIESLATKADSIVIGGGMCFTFLAAQGFSVGTSLLEDDMIEVCRGLLETYHDVLRLPVDLVVTEKFAADSPPQTVDVGAVPNGLMGLDIGPGSIKRFSTLLSNAGTIFWNGPMGVFEFPAYAAGTRGVAEAIVAATGKGAFSVVGGGDSAAAVRAMNIPEGAFSHISTGGGASLEYLEGKTLPGIEVLSREQPTGGVL</sequence>
<accession>P9WID1</accession>
<accession>L0T6N0</accession>
<accession>O06821</accession>
<accession>P65700</accession>
<gene>
    <name type="primary">pgk</name>
    <name type="ordered locus">Rv1437</name>
    <name type="ORF">MTCY493.17c</name>
</gene>
<protein>
    <recommendedName>
        <fullName>Phosphoglycerate kinase</fullName>
        <ecNumber>2.7.2.3</ecNumber>
    </recommendedName>
</protein>